<protein>
    <recommendedName>
        <fullName evidence="1">Small ribosomal subunit protein uS15</fullName>
    </recommendedName>
    <alternativeName>
        <fullName evidence="2">30S ribosomal protein S15</fullName>
    </alternativeName>
</protein>
<accession>Q6F1I2</accession>
<gene>
    <name evidence="1" type="primary">rpsO</name>
    <name type="ordered locus">Mfl284</name>
</gene>
<organism>
    <name type="scientific">Mesoplasma florum (strain ATCC 33453 / NBRC 100688 / NCTC 11704 / L1)</name>
    <name type="common">Acholeplasma florum</name>
    <dbReference type="NCBI Taxonomy" id="265311"/>
    <lineage>
        <taxon>Bacteria</taxon>
        <taxon>Bacillati</taxon>
        <taxon>Mycoplasmatota</taxon>
        <taxon>Mollicutes</taxon>
        <taxon>Entomoplasmatales</taxon>
        <taxon>Entomoplasmataceae</taxon>
        <taxon>Mesoplasma</taxon>
    </lineage>
</organism>
<name>RS15_MESFL</name>
<dbReference type="EMBL" id="AE017263">
    <property type="protein sequence ID" value="AAT75641.1"/>
    <property type="molecule type" value="Genomic_DNA"/>
</dbReference>
<dbReference type="RefSeq" id="WP_011183181.1">
    <property type="nucleotide sequence ID" value="NC_006055.1"/>
</dbReference>
<dbReference type="RefSeq" id="YP_053525.1">
    <property type="nucleotide sequence ID" value="NC_006055.1"/>
</dbReference>
<dbReference type="SMR" id="Q6F1I2"/>
<dbReference type="STRING" id="265311.Mfl284"/>
<dbReference type="PaxDb" id="265311-Mfl284"/>
<dbReference type="EnsemblBacteria" id="AAT75641">
    <property type="protein sequence ID" value="AAT75641"/>
    <property type="gene ID" value="Mfl284"/>
</dbReference>
<dbReference type="GeneID" id="2897993"/>
<dbReference type="KEGG" id="mfl:Mfl284"/>
<dbReference type="PATRIC" id="fig|265311.5.peg.284"/>
<dbReference type="eggNOG" id="COG0184">
    <property type="taxonomic scope" value="Bacteria"/>
</dbReference>
<dbReference type="HOGENOM" id="CLU_148518_0_0_14"/>
<dbReference type="OrthoDB" id="9799262at2"/>
<dbReference type="Proteomes" id="UP000006647">
    <property type="component" value="Chromosome"/>
</dbReference>
<dbReference type="GO" id="GO:0022627">
    <property type="term" value="C:cytosolic small ribosomal subunit"/>
    <property type="evidence" value="ECO:0007669"/>
    <property type="project" value="TreeGrafter"/>
</dbReference>
<dbReference type="GO" id="GO:0019843">
    <property type="term" value="F:rRNA binding"/>
    <property type="evidence" value="ECO:0007669"/>
    <property type="project" value="UniProtKB-UniRule"/>
</dbReference>
<dbReference type="GO" id="GO:0003735">
    <property type="term" value="F:structural constituent of ribosome"/>
    <property type="evidence" value="ECO:0007669"/>
    <property type="project" value="InterPro"/>
</dbReference>
<dbReference type="GO" id="GO:0006412">
    <property type="term" value="P:translation"/>
    <property type="evidence" value="ECO:0007669"/>
    <property type="project" value="UniProtKB-UniRule"/>
</dbReference>
<dbReference type="CDD" id="cd00353">
    <property type="entry name" value="Ribosomal_S15p_S13e"/>
    <property type="match status" value="1"/>
</dbReference>
<dbReference type="FunFam" id="1.10.287.10:FF:000002">
    <property type="entry name" value="30S ribosomal protein S15"/>
    <property type="match status" value="1"/>
</dbReference>
<dbReference type="Gene3D" id="6.10.250.3130">
    <property type="match status" value="1"/>
</dbReference>
<dbReference type="Gene3D" id="1.10.287.10">
    <property type="entry name" value="S15/NS1, RNA-binding"/>
    <property type="match status" value="1"/>
</dbReference>
<dbReference type="HAMAP" id="MF_01343_B">
    <property type="entry name" value="Ribosomal_uS15_B"/>
    <property type="match status" value="1"/>
</dbReference>
<dbReference type="InterPro" id="IPR000589">
    <property type="entry name" value="Ribosomal_uS15"/>
</dbReference>
<dbReference type="InterPro" id="IPR005290">
    <property type="entry name" value="Ribosomal_uS15_bac-type"/>
</dbReference>
<dbReference type="InterPro" id="IPR009068">
    <property type="entry name" value="uS15_NS1_RNA-bd_sf"/>
</dbReference>
<dbReference type="NCBIfam" id="TIGR00952">
    <property type="entry name" value="S15_bact"/>
    <property type="match status" value="1"/>
</dbReference>
<dbReference type="PANTHER" id="PTHR23321">
    <property type="entry name" value="RIBOSOMAL PROTEIN S15, BACTERIAL AND ORGANELLAR"/>
    <property type="match status" value="1"/>
</dbReference>
<dbReference type="PANTHER" id="PTHR23321:SF26">
    <property type="entry name" value="SMALL RIBOSOMAL SUBUNIT PROTEIN US15M"/>
    <property type="match status" value="1"/>
</dbReference>
<dbReference type="Pfam" id="PF00312">
    <property type="entry name" value="Ribosomal_S15"/>
    <property type="match status" value="1"/>
</dbReference>
<dbReference type="SMART" id="SM01387">
    <property type="entry name" value="Ribosomal_S15"/>
    <property type="match status" value="1"/>
</dbReference>
<dbReference type="SUPFAM" id="SSF47060">
    <property type="entry name" value="S15/NS1 RNA-binding domain"/>
    <property type="match status" value="1"/>
</dbReference>
<dbReference type="PROSITE" id="PS00362">
    <property type="entry name" value="RIBOSOMAL_S15"/>
    <property type="match status" value="1"/>
</dbReference>
<evidence type="ECO:0000255" key="1">
    <source>
        <dbReference type="HAMAP-Rule" id="MF_01343"/>
    </source>
</evidence>
<evidence type="ECO:0000305" key="2"/>
<comment type="function">
    <text evidence="1">One of the primary rRNA binding proteins, it binds directly to 16S rRNA where it helps nucleate assembly of the platform of the 30S subunit by binding and bridging several RNA helices of the 16S rRNA.</text>
</comment>
<comment type="function">
    <text evidence="1">Forms an intersubunit bridge (bridge B4) with the 23S rRNA of the 50S subunit in the ribosome.</text>
</comment>
<comment type="subunit">
    <text evidence="1">Part of the 30S ribosomal subunit. Forms a bridge to the 50S subunit in the 70S ribosome, contacting the 23S rRNA.</text>
</comment>
<comment type="similarity">
    <text evidence="1">Belongs to the universal ribosomal protein uS15 family.</text>
</comment>
<reference key="1">
    <citation type="submission" date="2004-06" db="EMBL/GenBank/DDBJ databases">
        <authorList>
            <person name="Birren B.W."/>
            <person name="Stange-Thomann N."/>
            <person name="Hafez N."/>
            <person name="DeCaprio D."/>
            <person name="Fisher S."/>
            <person name="Butler J."/>
            <person name="Elkins T."/>
            <person name="Kodira C.D."/>
            <person name="Major J."/>
            <person name="Wang S."/>
            <person name="Nicol R."/>
            <person name="Nusbaum C."/>
        </authorList>
    </citation>
    <scope>NUCLEOTIDE SEQUENCE [LARGE SCALE GENOMIC DNA]</scope>
    <source>
        <strain>ATCC 33453 / NBRC 100688 / NCTC 11704 / L1</strain>
    </source>
</reference>
<sequence length="88" mass="10151">MISKTRKAEIIKEFGGSEANTGLAEVQIALLTEDIANMTEHLKEHKKDVPTRRTLLKKVAQRRHLLDFLIKKDVNRYKEIIAKLGLRK</sequence>
<feature type="chain" id="PRO_0000115468" description="Small ribosomal subunit protein uS15">
    <location>
        <begin position="1"/>
        <end position="88"/>
    </location>
</feature>
<proteinExistence type="inferred from homology"/>
<keyword id="KW-1185">Reference proteome</keyword>
<keyword id="KW-0687">Ribonucleoprotein</keyword>
<keyword id="KW-0689">Ribosomal protein</keyword>
<keyword id="KW-0694">RNA-binding</keyword>
<keyword id="KW-0699">rRNA-binding</keyword>